<reference key="1">
    <citation type="journal article" date="2008" name="Antimicrob. Agents Chemother.">
        <title>Whole-genome pyrosequencing of an epidemic multidrug-resistant Acinetobacter baumannii strain belonging to the European clone II group.</title>
        <authorList>
            <person name="Iacono M."/>
            <person name="Villa L."/>
            <person name="Fortini D."/>
            <person name="Bordoni R."/>
            <person name="Imperi F."/>
            <person name="Bonnal R.J."/>
            <person name="Sicheritz-Ponten T."/>
            <person name="De Bellis G."/>
            <person name="Visca P."/>
            <person name="Cassone A."/>
            <person name="Carattoli A."/>
        </authorList>
    </citation>
    <scope>NUCLEOTIDE SEQUENCE [LARGE SCALE GENOMIC DNA]</scope>
    <source>
        <strain>ACICU</strain>
    </source>
</reference>
<dbReference type="EMBL" id="CP000863">
    <property type="protein sequence ID" value="ACC55613.1"/>
    <property type="molecule type" value="Genomic_DNA"/>
</dbReference>
<dbReference type="RefSeq" id="WP_001196213.1">
    <property type="nucleotide sequence ID" value="NZ_CP031380.1"/>
</dbReference>
<dbReference type="SMR" id="B2I1Y9"/>
<dbReference type="GeneID" id="92892282"/>
<dbReference type="KEGG" id="abc:ACICU_00301"/>
<dbReference type="HOGENOM" id="CLU_092227_0_2_6"/>
<dbReference type="Proteomes" id="UP000008839">
    <property type="component" value="Chromosome"/>
</dbReference>
<dbReference type="GO" id="GO:0015934">
    <property type="term" value="C:large ribosomal subunit"/>
    <property type="evidence" value="ECO:0007669"/>
    <property type="project" value="InterPro"/>
</dbReference>
<dbReference type="GO" id="GO:0070180">
    <property type="term" value="F:large ribosomal subunit rRNA binding"/>
    <property type="evidence" value="ECO:0007669"/>
    <property type="project" value="UniProtKB-UniRule"/>
</dbReference>
<dbReference type="GO" id="GO:0003735">
    <property type="term" value="F:structural constituent of ribosome"/>
    <property type="evidence" value="ECO:0007669"/>
    <property type="project" value="InterPro"/>
</dbReference>
<dbReference type="GO" id="GO:0006412">
    <property type="term" value="P:translation"/>
    <property type="evidence" value="ECO:0007669"/>
    <property type="project" value="UniProtKB-UniRule"/>
</dbReference>
<dbReference type="CDD" id="cd05797">
    <property type="entry name" value="Ribosomal_L10"/>
    <property type="match status" value="1"/>
</dbReference>
<dbReference type="Gene3D" id="3.30.70.1730">
    <property type="match status" value="1"/>
</dbReference>
<dbReference type="HAMAP" id="MF_00362">
    <property type="entry name" value="Ribosomal_uL10"/>
    <property type="match status" value="1"/>
</dbReference>
<dbReference type="InterPro" id="IPR001790">
    <property type="entry name" value="Ribosomal_uL10"/>
</dbReference>
<dbReference type="InterPro" id="IPR043141">
    <property type="entry name" value="Ribosomal_uL10-like_sf"/>
</dbReference>
<dbReference type="InterPro" id="IPR022973">
    <property type="entry name" value="Ribosomal_uL10_bac"/>
</dbReference>
<dbReference type="InterPro" id="IPR047865">
    <property type="entry name" value="Ribosomal_uL10_bac_type"/>
</dbReference>
<dbReference type="InterPro" id="IPR002363">
    <property type="entry name" value="Ribosomal_uL10_CS_bac"/>
</dbReference>
<dbReference type="NCBIfam" id="NF000955">
    <property type="entry name" value="PRK00099.1-1"/>
    <property type="match status" value="1"/>
</dbReference>
<dbReference type="PANTHER" id="PTHR11560">
    <property type="entry name" value="39S RIBOSOMAL PROTEIN L10, MITOCHONDRIAL"/>
    <property type="match status" value="1"/>
</dbReference>
<dbReference type="Pfam" id="PF00466">
    <property type="entry name" value="Ribosomal_L10"/>
    <property type="match status" value="1"/>
</dbReference>
<dbReference type="SUPFAM" id="SSF160369">
    <property type="entry name" value="Ribosomal protein L10-like"/>
    <property type="match status" value="1"/>
</dbReference>
<dbReference type="PROSITE" id="PS01109">
    <property type="entry name" value="RIBOSOMAL_L10"/>
    <property type="match status" value="1"/>
</dbReference>
<feature type="chain" id="PRO_1000120901" description="Large ribosomal subunit protein uL10">
    <location>
        <begin position="1"/>
        <end position="168"/>
    </location>
</feature>
<name>RL10_ACIBC</name>
<keyword id="KW-0687">Ribonucleoprotein</keyword>
<keyword id="KW-0689">Ribosomal protein</keyword>
<keyword id="KW-0694">RNA-binding</keyword>
<keyword id="KW-0699">rRNA-binding</keyword>
<proteinExistence type="inferred from homology"/>
<evidence type="ECO:0000255" key="1">
    <source>
        <dbReference type="HAMAP-Rule" id="MF_00362"/>
    </source>
</evidence>
<evidence type="ECO:0000305" key="2"/>
<protein>
    <recommendedName>
        <fullName evidence="1">Large ribosomal subunit protein uL10</fullName>
    </recommendedName>
    <alternativeName>
        <fullName evidence="2">50S ribosomal protein L10</fullName>
    </alternativeName>
</protein>
<sequence>MALLIEDKKQIVAEVSEVASKAFAAVVADYQGLSVEQLTTLRVEARKLGVTTRIVRNTLAKRAFQGTQFDILNDNLVGPTILGFSTSEDDMGAAARLFEEFAKTNKAFELKAAAFDGKVYQGADVSVIANLPNQEKALTMLASVLQAPISKLGRLITALKEKNESEAA</sequence>
<comment type="function">
    <text evidence="1">Forms part of the ribosomal stalk, playing a central role in the interaction of the ribosome with GTP-bound translation factors.</text>
</comment>
<comment type="subunit">
    <text evidence="1">Part of the ribosomal stalk of the 50S ribosomal subunit. The N-terminus interacts with L11 and the large rRNA to form the base of the stalk. The C-terminus forms an elongated spine to which L12 dimers bind in a sequential fashion forming a multimeric L10(L12)X complex.</text>
</comment>
<comment type="similarity">
    <text evidence="1">Belongs to the universal ribosomal protein uL10 family.</text>
</comment>
<organism>
    <name type="scientific">Acinetobacter baumannii (strain ACICU)</name>
    <dbReference type="NCBI Taxonomy" id="405416"/>
    <lineage>
        <taxon>Bacteria</taxon>
        <taxon>Pseudomonadati</taxon>
        <taxon>Pseudomonadota</taxon>
        <taxon>Gammaproteobacteria</taxon>
        <taxon>Moraxellales</taxon>
        <taxon>Moraxellaceae</taxon>
        <taxon>Acinetobacter</taxon>
        <taxon>Acinetobacter calcoaceticus/baumannii complex</taxon>
    </lineage>
</organism>
<gene>
    <name evidence="1" type="primary">rplJ</name>
    <name type="ordered locus">ACICU_00301</name>
</gene>
<accession>B2I1Y9</accession>